<organism>
    <name type="scientific">Plasmodium falciparum (isolate 3D7)</name>
    <dbReference type="NCBI Taxonomy" id="36329"/>
    <lineage>
        <taxon>Eukaryota</taxon>
        <taxon>Sar</taxon>
        <taxon>Alveolata</taxon>
        <taxon>Apicomplexa</taxon>
        <taxon>Aconoidasida</taxon>
        <taxon>Haemosporida</taxon>
        <taxon>Plasmodiidae</taxon>
        <taxon>Plasmodium</taxon>
        <taxon>Plasmodium (Laverania)</taxon>
    </lineage>
</organism>
<gene>
    <name evidence="7" type="primary">CAM</name>
    <name type="ORF">PF14_0323</name>
    <name type="ORF">PF3D7_1434200</name>
</gene>
<protein>
    <recommendedName>
        <fullName evidence="5">Calmodulin</fullName>
        <shortName evidence="6">PfCaM</shortName>
    </recommendedName>
</protein>
<feature type="initiator methionine" description="Removed" evidence="1">
    <location>
        <position position="1"/>
    </location>
</feature>
<feature type="chain" id="PRO_0000198265" description="Calmodulin">
    <location>
        <begin position="2"/>
        <end position="149"/>
    </location>
</feature>
<feature type="domain" description="EF-hand 1" evidence="3">
    <location>
        <begin position="8"/>
        <end position="43"/>
    </location>
</feature>
<feature type="domain" description="EF-hand 2" evidence="3">
    <location>
        <begin position="44"/>
        <end position="79"/>
    </location>
</feature>
<feature type="domain" description="EF-hand 3" evidence="3">
    <location>
        <begin position="81"/>
        <end position="116"/>
    </location>
</feature>
<feature type="domain" description="EF-hand 4" evidence="3">
    <location>
        <begin position="117"/>
        <end position="149"/>
    </location>
</feature>
<feature type="binding site" evidence="3">
    <location>
        <position position="21"/>
    </location>
    <ligand>
        <name>Ca(2+)</name>
        <dbReference type="ChEBI" id="CHEBI:29108"/>
        <label>1</label>
    </ligand>
</feature>
<feature type="binding site" evidence="3">
    <location>
        <position position="23"/>
    </location>
    <ligand>
        <name>Ca(2+)</name>
        <dbReference type="ChEBI" id="CHEBI:29108"/>
        <label>1</label>
    </ligand>
</feature>
<feature type="binding site" evidence="3">
    <location>
        <position position="25"/>
    </location>
    <ligand>
        <name>Ca(2+)</name>
        <dbReference type="ChEBI" id="CHEBI:29108"/>
        <label>1</label>
    </ligand>
</feature>
<feature type="binding site" evidence="3">
    <location>
        <position position="27"/>
    </location>
    <ligand>
        <name>Ca(2+)</name>
        <dbReference type="ChEBI" id="CHEBI:29108"/>
        <label>1</label>
    </ligand>
</feature>
<feature type="binding site" evidence="3">
    <location>
        <position position="32"/>
    </location>
    <ligand>
        <name>Ca(2+)</name>
        <dbReference type="ChEBI" id="CHEBI:29108"/>
        <label>1</label>
    </ligand>
</feature>
<feature type="binding site" evidence="3">
    <location>
        <position position="57"/>
    </location>
    <ligand>
        <name>Ca(2+)</name>
        <dbReference type="ChEBI" id="CHEBI:29108"/>
        <label>2</label>
    </ligand>
</feature>
<feature type="binding site" evidence="3">
    <location>
        <position position="59"/>
    </location>
    <ligand>
        <name>Ca(2+)</name>
        <dbReference type="ChEBI" id="CHEBI:29108"/>
        <label>2</label>
    </ligand>
</feature>
<feature type="binding site" evidence="3">
    <location>
        <position position="61"/>
    </location>
    <ligand>
        <name>Ca(2+)</name>
        <dbReference type="ChEBI" id="CHEBI:29108"/>
        <label>2</label>
    </ligand>
</feature>
<feature type="binding site" evidence="3">
    <location>
        <position position="63"/>
    </location>
    <ligand>
        <name>Ca(2+)</name>
        <dbReference type="ChEBI" id="CHEBI:29108"/>
        <label>2</label>
    </ligand>
</feature>
<feature type="binding site" evidence="3">
    <location>
        <position position="68"/>
    </location>
    <ligand>
        <name>Ca(2+)</name>
        <dbReference type="ChEBI" id="CHEBI:29108"/>
        <label>2</label>
    </ligand>
</feature>
<feature type="binding site" evidence="3">
    <location>
        <position position="94"/>
    </location>
    <ligand>
        <name>Ca(2+)</name>
        <dbReference type="ChEBI" id="CHEBI:29108"/>
        <label>3</label>
    </ligand>
</feature>
<feature type="binding site" evidence="3">
    <location>
        <position position="96"/>
    </location>
    <ligand>
        <name>Ca(2+)</name>
        <dbReference type="ChEBI" id="CHEBI:29108"/>
        <label>3</label>
    </ligand>
</feature>
<feature type="binding site" evidence="3">
    <location>
        <position position="98"/>
    </location>
    <ligand>
        <name>Ca(2+)</name>
        <dbReference type="ChEBI" id="CHEBI:29108"/>
        <label>3</label>
    </ligand>
</feature>
<feature type="binding site" evidence="3">
    <location>
        <position position="100"/>
    </location>
    <ligand>
        <name>Ca(2+)</name>
        <dbReference type="ChEBI" id="CHEBI:29108"/>
        <label>3</label>
    </ligand>
</feature>
<feature type="binding site" evidence="3">
    <location>
        <position position="105"/>
    </location>
    <ligand>
        <name>Ca(2+)</name>
        <dbReference type="ChEBI" id="CHEBI:29108"/>
        <label>3</label>
    </ligand>
</feature>
<feature type="binding site" evidence="3">
    <location>
        <position position="130"/>
    </location>
    <ligand>
        <name>Ca(2+)</name>
        <dbReference type="ChEBI" id="CHEBI:29108"/>
        <label>4</label>
    </ligand>
</feature>
<feature type="binding site" evidence="3">
    <location>
        <position position="132"/>
    </location>
    <ligand>
        <name>Ca(2+)</name>
        <dbReference type="ChEBI" id="CHEBI:29108"/>
        <label>4</label>
    </ligand>
</feature>
<feature type="binding site" evidence="3">
    <location>
        <position position="134"/>
    </location>
    <ligand>
        <name>Ca(2+)</name>
        <dbReference type="ChEBI" id="CHEBI:29108"/>
        <label>4</label>
    </ligand>
</feature>
<feature type="binding site" evidence="3">
    <location>
        <position position="136"/>
    </location>
    <ligand>
        <name>Ca(2+)</name>
        <dbReference type="ChEBI" id="CHEBI:29108"/>
        <label>4</label>
    </ligand>
</feature>
<feature type="binding site" evidence="3">
    <location>
        <position position="141"/>
    </location>
    <ligand>
        <name>Ca(2+)</name>
        <dbReference type="ChEBI" id="CHEBI:29108"/>
        <label>4</label>
    </ligand>
</feature>
<feature type="modified residue" description="N-acetylalanine" evidence="1">
    <location>
        <position position="2"/>
    </location>
</feature>
<feature type="helix" evidence="8">
    <location>
        <begin position="7"/>
        <end position="20"/>
    </location>
</feature>
<feature type="strand" evidence="8">
    <location>
        <begin position="25"/>
        <end position="28"/>
    </location>
</feature>
<feature type="helix" evidence="8">
    <location>
        <begin position="30"/>
        <end position="39"/>
    </location>
</feature>
<feature type="helix" evidence="8">
    <location>
        <begin position="46"/>
        <end position="54"/>
    </location>
</feature>
<feature type="strand" evidence="8">
    <location>
        <begin position="58"/>
        <end position="64"/>
    </location>
</feature>
<feature type="helix" evidence="8">
    <location>
        <begin position="66"/>
        <end position="76"/>
    </location>
</feature>
<feature type="helix" evidence="8">
    <location>
        <begin position="86"/>
        <end position="93"/>
    </location>
</feature>
<feature type="helix" evidence="8">
    <location>
        <begin position="103"/>
        <end position="112"/>
    </location>
</feature>
<feature type="helix" evidence="8">
    <location>
        <begin position="119"/>
        <end position="129"/>
    </location>
</feature>
<feature type="strand" evidence="8">
    <location>
        <begin position="134"/>
        <end position="137"/>
    </location>
</feature>
<feature type="helix" evidence="8">
    <location>
        <begin position="139"/>
        <end position="145"/>
    </location>
</feature>
<keyword id="KW-0002">3D-structure</keyword>
<keyword id="KW-0007">Acetylation</keyword>
<keyword id="KW-0106">Calcium</keyword>
<keyword id="KW-0963">Cytoplasm</keyword>
<keyword id="KW-0479">Metal-binding</keyword>
<keyword id="KW-1185">Reference proteome</keyword>
<keyword id="KW-0677">Repeat</keyword>
<evidence type="ECO:0000250" key="1">
    <source>
        <dbReference type="UniProtKB" id="P0DP23"/>
    </source>
</evidence>
<evidence type="ECO:0000250" key="2">
    <source>
        <dbReference type="UniProtKB" id="P24044"/>
    </source>
</evidence>
<evidence type="ECO:0000255" key="3">
    <source>
        <dbReference type="PROSITE-ProRule" id="PRU00448"/>
    </source>
</evidence>
<evidence type="ECO:0000269" key="4">
    <source>
    </source>
</evidence>
<evidence type="ECO:0000303" key="5">
    <source>
    </source>
</evidence>
<evidence type="ECO:0000303" key="6">
    <source>
    </source>
</evidence>
<evidence type="ECO:0000305" key="7"/>
<evidence type="ECO:0007829" key="8">
    <source>
        <dbReference type="PDB" id="8AHT"/>
    </source>
</evidence>
<accession>P62203</accession>
<accession>A0A144A1Y0</accession>
<proteinExistence type="evidence at protein level"/>
<dbReference type="EMBL" id="LN999946">
    <property type="protein sequence ID" value="CZU00039.1"/>
    <property type="molecule type" value="Genomic_DNA"/>
</dbReference>
<dbReference type="RefSeq" id="XP_001348497.1">
    <property type="nucleotide sequence ID" value="XM_001348461.1"/>
</dbReference>
<dbReference type="PDB" id="8AHT">
    <property type="method" value="X-ray"/>
    <property type="resolution" value="2.20 A"/>
    <property type="chains" value="A/B/C/D=1-149"/>
</dbReference>
<dbReference type="PDBsum" id="8AHT"/>
<dbReference type="SMR" id="P62203"/>
<dbReference type="BioGRID" id="1207263">
    <property type="interactions" value="10"/>
</dbReference>
<dbReference type="FunCoup" id="P62203">
    <property type="interactions" value="9"/>
</dbReference>
<dbReference type="IntAct" id="P62203">
    <property type="interactions" value="7"/>
</dbReference>
<dbReference type="STRING" id="36329.P62203"/>
<dbReference type="PaxDb" id="5833-PF14_0323"/>
<dbReference type="EnsemblProtists" id="CZU00039">
    <property type="protein sequence ID" value="CZU00039"/>
    <property type="gene ID" value="PF3D7_1434200"/>
</dbReference>
<dbReference type="GeneID" id="811905"/>
<dbReference type="KEGG" id="pfa:PF3D7_1434200"/>
<dbReference type="VEuPathDB" id="PlasmoDB:PF3D7_1434200"/>
<dbReference type="HOGENOM" id="CLU_061288_2_0_1"/>
<dbReference type="OMA" id="ARKMKEC"/>
<dbReference type="OrthoDB" id="26525at2759"/>
<dbReference type="PhylomeDB" id="P62203"/>
<dbReference type="Reactome" id="R-PFA-111932">
    <property type="pathway name" value="CaMK IV-mediated phosphorylation of CREB"/>
</dbReference>
<dbReference type="Reactome" id="R-PFA-111957">
    <property type="pathway name" value="Cam-PDE 1 activation"/>
</dbReference>
<dbReference type="Reactome" id="R-PFA-114608">
    <property type="pathway name" value="Platelet degranulation"/>
</dbReference>
<dbReference type="Reactome" id="R-PFA-1474151">
    <property type="pathway name" value="Tetrahydrobiopterin (BH4) synthesis, recycling, salvage and regulation"/>
</dbReference>
<dbReference type="Reactome" id="R-PFA-1855204">
    <property type="pathway name" value="Synthesis of IP3 and IP4 in the cytosol"/>
</dbReference>
<dbReference type="Reactome" id="R-PFA-203615">
    <property type="pathway name" value="eNOS activation"/>
</dbReference>
<dbReference type="Reactome" id="R-PFA-2871809">
    <property type="pathway name" value="FCERI mediated Ca+2 mobilization"/>
</dbReference>
<dbReference type="Reactome" id="R-PFA-4086398">
    <property type="pathway name" value="Ca2+ pathway"/>
</dbReference>
<dbReference type="Reactome" id="R-PFA-442729">
    <property type="pathway name" value="CREB1 phosphorylation through the activation of CaMKII/CaMKK/CaMKIV cascasde"/>
</dbReference>
<dbReference type="Reactome" id="R-PFA-5218920">
    <property type="pathway name" value="VEGFR2 mediated vascular permeability"/>
</dbReference>
<dbReference type="Reactome" id="R-PFA-5578775">
    <property type="pathway name" value="Ion homeostasis"/>
</dbReference>
<dbReference type="Reactome" id="R-PFA-5607763">
    <property type="pathway name" value="CLEC7A (Dectin-1) induces NFAT activation"/>
</dbReference>
<dbReference type="Reactome" id="R-PFA-6798695">
    <property type="pathway name" value="Neutrophil degranulation"/>
</dbReference>
<dbReference type="Reactome" id="R-PFA-9009391">
    <property type="pathway name" value="Extra-nuclear estrogen signaling"/>
</dbReference>
<dbReference type="Reactome" id="R-PFA-936837">
    <property type="pathway name" value="Ion transport by P-type ATPases"/>
</dbReference>
<dbReference type="Reactome" id="R-PFA-9619229">
    <property type="pathway name" value="Activation of RAC1 downstream of NMDARs"/>
</dbReference>
<dbReference type="Proteomes" id="UP000001450">
    <property type="component" value="Chromosome 14"/>
</dbReference>
<dbReference type="GO" id="GO:0020007">
    <property type="term" value="C:apical complex"/>
    <property type="evidence" value="ECO:0000250"/>
    <property type="project" value="UniProtKB"/>
</dbReference>
<dbReference type="GO" id="GO:0005737">
    <property type="term" value="C:cytoplasm"/>
    <property type="evidence" value="ECO:0000250"/>
    <property type="project" value="UniProtKB"/>
</dbReference>
<dbReference type="GO" id="GO:0005509">
    <property type="term" value="F:calcium ion binding"/>
    <property type="evidence" value="ECO:0000318"/>
    <property type="project" value="GO_Central"/>
</dbReference>
<dbReference type="GO" id="GO:0061891">
    <property type="term" value="F:calcium ion sensor activity"/>
    <property type="evidence" value="ECO:0000314"/>
    <property type="project" value="UniProtKB"/>
</dbReference>
<dbReference type="GO" id="GO:0008047">
    <property type="term" value="F:enzyme activator activity"/>
    <property type="evidence" value="ECO:0000314"/>
    <property type="project" value="UniProtKB"/>
</dbReference>
<dbReference type="GO" id="GO:0030234">
    <property type="term" value="F:enzyme regulator activity"/>
    <property type="evidence" value="ECO:0000318"/>
    <property type="project" value="GO_Central"/>
</dbReference>
<dbReference type="CDD" id="cd00051">
    <property type="entry name" value="EFh"/>
    <property type="match status" value="2"/>
</dbReference>
<dbReference type="FunFam" id="1.10.238.10:FF:000042">
    <property type="entry name" value="Calmodulin"/>
    <property type="match status" value="1"/>
</dbReference>
<dbReference type="FunFam" id="1.10.238.10:FF:000398">
    <property type="entry name" value="Calmodulin-like protein 3"/>
    <property type="match status" value="1"/>
</dbReference>
<dbReference type="Gene3D" id="1.10.238.10">
    <property type="entry name" value="EF-hand"/>
    <property type="match status" value="3"/>
</dbReference>
<dbReference type="InterPro" id="IPR050230">
    <property type="entry name" value="CALM/Myosin/TropC-like"/>
</dbReference>
<dbReference type="InterPro" id="IPR011992">
    <property type="entry name" value="EF-hand-dom_pair"/>
</dbReference>
<dbReference type="InterPro" id="IPR018247">
    <property type="entry name" value="EF_Hand_1_Ca_BS"/>
</dbReference>
<dbReference type="InterPro" id="IPR002048">
    <property type="entry name" value="EF_hand_dom"/>
</dbReference>
<dbReference type="PANTHER" id="PTHR23048:SF0">
    <property type="entry name" value="CALMODULIN LIKE 3"/>
    <property type="match status" value="1"/>
</dbReference>
<dbReference type="PANTHER" id="PTHR23048">
    <property type="entry name" value="MYOSIN LIGHT CHAIN 1, 3"/>
    <property type="match status" value="1"/>
</dbReference>
<dbReference type="Pfam" id="PF13499">
    <property type="entry name" value="EF-hand_7"/>
    <property type="match status" value="2"/>
</dbReference>
<dbReference type="PRINTS" id="PR00450">
    <property type="entry name" value="RECOVERIN"/>
</dbReference>
<dbReference type="SMART" id="SM00054">
    <property type="entry name" value="EFh"/>
    <property type="match status" value="4"/>
</dbReference>
<dbReference type="SUPFAM" id="SSF47473">
    <property type="entry name" value="EF-hand"/>
    <property type="match status" value="1"/>
</dbReference>
<dbReference type="PROSITE" id="PS00018">
    <property type="entry name" value="EF_HAND_1"/>
    <property type="match status" value="4"/>
</dbReference>
<dbReference type="PROSITE" id="PS50222">
    <property type="entry name" value="EF_HAND_2"/>
    <property type="match status" value="4"/>
</dbReference>
<reference key="1">
    <citation type="journal article" date="2002" name="Nature">
        <title>Genome sequence of the human malaria parasite Plasmodium falciparum.</title>
        <authorList>
            <person name="Gardner M.J."/>
            <person name="Hall N."/>
            <person name="Fung E."/>
            <person name="White O."/>
            <person name="Berriman M."/>
            <person name="Hyman R.W."/>
            <person name="Carlton J.M."/>
            <person name="Pain A."/>
            <person name="Nelson K.E."/>
            <person name="Bowman S."/>
            <person name="Paulsen I.T."/>
            <person name="James K.D."/>
            <person name="Eisen J.A."/>
            <person name="Rutherford K.M."/>
            <person name="Salzberg S.L."/>
            <person name="Craig A."/>
            <person name="Kyes S."/>
            <person name="Chan M.-S."/>
            <person name="Nene V."/>
            <person name="Shallom S.J."/>
            <person name="Suh B."/>
            <person name="Peterson J."/>
            <person name="Angiuoli S."/>
            <person name="Pertea M."/>
            <person name="Allen J."/>
            <person name="Selengut J."/>
            <person name="Haft D."/>
            <person name="Mather M.W."/>
            <person name="Vaidya A.B."/>
            <person name="Martin D.M.A."/>
            <person name="Fairlamb A.H."/>
            <person name="Fraunholz M.J."/>
            <person name="Roos D.S."/>
            <person name="Ralph S.A."/>
            <person name="McFadden G.I."/>
            <person name="Cummings L.M."/>
            <person name="Subramanian G.M."/>
            <person name="Mungall C."/>
            <person name="Venter J.C."/>
            <person name="Carucci D.J."/>
            <person name="Hoffman S.L."/>
            <person name="Newbold C."/>
            <person name="Davis R.W."/>
            <person name="Fraser C.M."/>
            <person name="Barrell B.G."/>
        </authorList>
    </citation>
    <scope>NUCLEOTIDE SEQUENCE [LARGE SCALE GENOMIC DNA]</scope>
    <source>
        <strain>3D7</strain>
    </source>
</reference>
<reference key="2">
    <citation type="journal article" date="2020" name="FASEB Bioadv.">
        <title>Comparison of ligand binding and conformational stability of human calmodulin with its homolog from the malaria parasite Plasmodium falciparum.</title>
        <authorList>
            <person name="Juhasz T."/>
            <person name="Kardos J."/>
            <person name="Duervanger Z."/>
            <person name="Harmat V."/>
            <person name="Liliom K."/>
        </authorList>
    </citation>
    <scope>FUNCTION</scope>
</reference>
<sequence>MADKLTEEQISEFKEAFSLFDKDGDGTITTKELGTVMRSLGQNPTEAELQDMINEIDTDGNGTIDFPEFLTLMARKLKDTDTEEELIEAFRVFDRDGDGYISADELRHVMTNLGEKLTNEEVDEMIREADIDGDGQINYEEFVKMMIAK</sequence>
<name>CALM_PLAF7</name>
<comment type="function">
    <text evidence="4">Calmodulin mediates the control of a large number of enzymes, ion channels and other proteins by Ca(2+) (PubMed:32821880). Among the enzymes to be stimulated by the calmodulin-Ca(2+) complex are a number of protein kinases and phosphatases (PubMed:32821880).</text>
</comment>
<comment type="subcellular location">
    <subcellularLocation>
        <location evidence="2">Cytoplasm</location>
    </subcellularLocation>
    <text evidence="2">In trophozoites and schizonts, localizes throughout the cytoplasm. In merozoites, localizes to the apical complex.</text>
</comment>
<comment type="miscellaneous">
    <text evidence="2">Calmodulin is not involved in the mechanism of chloroquine resistance.</text>
</comment>
<comment type="similarity">
    <text evidence="7">Belongs to the calmodulin family.</text>
</comment>